<gene>
    <name evidence="1" type="primary">rpoB</name>
    <name type="ordered locus">SP_1961</name>
</gene>
<name>RPOB_STRPN</name>
<protein>
    <recommendedName>
        <fullName evidence="1">DNA-directed RNA polymerase subunit beta</fullName>
        <shortName evidence="1">RNAP subunit beta</shortName>
        <ecNumber evidence="1">2.7.7.6</ecNumber>
    </recommendedName>
    <alternativeName>
        <fullName evidence="1">RNA polymerase subunit beta</fullName>
    </alternativeName>
    <alternativeName>
        <fullName evidence="1">Transcriptase subunit beta</fullName>
    </alternativeName>
</protein>
<organism>
    <name type="scientific">Streptococcus pneumoniae serotype 4 (strain ATCC BAA-334 / TIGR4)</name>
    <dbReference type="NCBI Taxonomy" id="170187"/>
    <lineage>
        <taxon>Bacteria</taxon>
        <taxon>Bacillati</taxon>
        <taxon>Bacillota</taxon>
        <taxon>Bacilli</taxon>
        <taxon>Lactobacillales</taxon>
        <taxon>Streptococcaceae</taxon>
        <taxon>Streptococcus</taxon>
    </lineage>
</organism>
<comment type="function">
    <text evidence="1">DNA-dependent RNA polymerase catalyzes the transcription of DNA into RNA using the four ribonucleoside triphosphates as substrates.</text>
</comment>
<comment type="catalytic activity">
    <reaction evidence="1">
        <text>RNA(n) + a ribonucleoside 5'-triphosphate = RNA(n+1) + diphosphate</text>
        <dbReference type="Rhea" id="RHEA:21248"/>
        <dbReference type="Rhea" id="RHEA-COMP:14527"/>
        <dbReference type="Rhea" id="RHEA-COMP:17342"/>
        <dbReference type="ChEBI" id="CHEBI:33019"/>
        <dbReference type="ChEBI" id="CHEBI:61557"/>
        <dbReference type="ChEBI" id="CHEBI:140395"/>
        <dbReference type="EC" id="2.7.7.6"/>
    </reaction>
</comment>
<comment type="subunit">
    <text evidence="1">The RNAP catalytic core consists of 2 alpha, 1 beta, 1 beta' and 1 omega subunit. When a sigma factor is associated with the core the holoenzyme is formed, which can initiate transcription.</text>
</comment>
<comment type="similarity">
    <text evidence="1">Belongs to the RNA polymerase beta chain family.</text>
</comment>
<accession>Q97NQ7</accession>
<sequence length="1203" mass="134362">MAGHDVQYGKHRTRRSFSRIKEVLDLPNLIEIQTDSFKAFLDHGLKEVFEDVLPISNFTDTMELEFVGYEIKEPKYTLEEARIHDASYSAPIFVTFRLINKETSEIKTQEVFFGDFPIMTEMGTFIINGGERIIVSQLVRSPGVYFNDKVDKNGKVGYGSTVIPNRGAWLELESDSKDITYTRIDRTRKIPFTTLVRALGFSGDDEIFDIFGDSELVRNTVEKDIHKNPMDSRTDEALKEIYERLRPGEPKTAESSRSLLVARFFDPRRYDLAAVGRYKINKKLNVKTRLLNQTIAEPLVDPETGEILVEAGTIMTRSVIESIESHLDGDLNKIVYIPNDAAVVTEPVVLQKFKVIAPTDPDRVVTIIGNANPDDKVRTVTPADILAEMSYFLNLAEGLGRVDDIDHLGNRRIRAVGELLANQVRLGLSRMERNVRERMSVQDNEVLTPQQIINIRPVTAAVKEFFGSSQLSQFMDQHNPLSELSHKRRLSALGPGGLTRDRAGYEVRDVHYTHYGRMCPIETPEGPNIGLINNLSSYGHLNKYGFVQTPYRKVDRETGVVTNEIVWLTADEEDEYTVAQANSRLNEDGTFAEKIVMGRHQGVNQEYPANIVDYMDVSPKQVVAVATACIPFLENDDSNRALMGANMQRQAVPLINPQAPYVGTGMEYQAAHDSGAAVIAQYDGKVTYADADKVEVRREDGSLDVYHIQKFRRSNSGTAYNQRTLVKVGDVVEKGDFIADGPSMENGEMALGQNPIVAYMTWEGYNFEDAVIMSERLVKDDVYTSVHLEEYESETRDTKLGPEEITREIPNVGEDALKDLDEMGIIRIGAEVKEGDILVGKVTPKGEKDLSAEERLLHAIFGDKSREVRDTSLRVPHGADGVVRDVKIFTRVNGDELQSGVNMLVRVYIAQKRKIKVGDKMAGRHGNKGVVSRIVPVEDMPYLPDGTPVDIMLNPLGVPSRMNIGQVMELHLGMAARTLGIHIATPVFDGASSEDLWSTVKEAGMDSDAKTILYDGRTGEPFDNRVSVGVMYMIKLHHMVDDKLHARSVGPYSTVTQQPLGGKAQFGGQRFGEMEVWALEAYGASNVLQEILTYKSDDINGRLKAYEAITKGKPIPKPGVPESFRVLVKELQSLGLDMRVLDEDDQEVELRDLDEGMDEDVIHVDDLEKAREKAAQEAKAAFEAEEAEKATKAEATEEAAEQE</sequence>
<reference key="1">
    <citation type="journal article" date="2001" name="Science">
        <title>Complete genome sequence of a virulent isolate of Streptococcus pneumoniae.</title>
        <authorList>
            <person name="Tettelin H."/>
            <person name="Nelson K.E."/>
            <person name="Paulsen I.T."/>
            <person name="Eisen J.A."/>
            <person name="Read T.D."/>
            <person name="Peterson S.N."/>
            <person name="Heidelberg J.F."/>
            <person name="DeBoy R.T."/>
            <person name="Haft D.H."/>
            <person name="Dodson R.J."/>
            <person name="Durkin A.S."/>
            <person name="Gwinn M.L."/>
            <person name="Kolonay J.F."/>
            <person name="Nelson W.C."/>
            <person name="Peterson J.D."/>
            <person name="Umayam L.A."/>
            <person name="White O."/>
            <person name="Salzberg S.L."/>
            <person name="Lewis M.R."/>
            <person name="Radune D."/>
            <person name="Holtzapple E.K."/>
            <person name="Khouri H.M."/>
            <person name="Wolf A.M."/>
            <person name="Utterback T.R."/>
            <person name="Hansen C.L."/>
            <person name="McDonald L.A."/>
            <person name="Feldblyum T.V."/>
            <person name="Angiuoli S.V."/>
            <person name="Dickinson T."/>
            <person name="Hickey E.K."/>
            <person name="Holt I.E."/>
            <person name="Loftus B.J."/>
            <person name="Yang F."/>
            <person name="Smith H.O."/>
            <person name="Venter J.C."/>
            <person name="Dougherty B.A."/>
            <person name="Morrison D.A."/>
            <person name="Hollingshead S.K."/>
            <person name="Fraser C.M."/>
        </authorList>
    </citation>
    <scope>NUCLEOTIDE SEQUENCE [LARGE SCALE GENOMIC DNA]</scope>
    <source>
        <strain>ATCC BAA-334 / TIGR4</strain>
    </source>
</reference>
<feature type="chain" id="PRO_0000047974" description="DNA-directed RNA polymerase subunit beta">
    <location>
        <begin position="1"/>
        <end position="1203"/>
    </location>
</feature>
<feature type="region of interest" description="Disordered" evidence="2">
    <location>
        <begin position="1174"/>
        <end position="1203"/>
    </location>
</feature>
<feature type="compositionally biased region" description="Basic and acidic residues" evidence="2">
    <location>
        <begin position="1174"/>
        <end position="1195"/>
    </location>
</feature>
<evidence type="ECO:0000255" key="1">
    <source>
        <dbReference type="HAMAP-Rule" id="MF_01321"/>
    </source>
</evidence>
<evidence type="ECO:0000256" key="2">
    <source>
        <dbReference type="SAM" id="MobiDB-lite"/>
    </source>
</evidence>
<proteinExistence type="inferred from homology"/>
<keyword id="KW-0240">DNA-directed RNA polymerase</keyword>
<keyword id="KW-0548">Nucleotidyltransferase</keyword>
<keyword id="KW-1185">Reference proteome</keyword>
<keyword id="KW-0804">Transcription</keyword>
<keyword id="KW-0808">Transferase</keyword>
<dbReference type="EC" id="2.7.7.6" evidence="1"/>
<dbReference type="EMBL" id="AE005672">
    <property type="protein sequence ID" value="AAK76028.1"/>
    <property type="molecule type" value="Genomic_DNA"/>
</dbReference>
<dbReference type="PIR" id="C95229">
    <property type="entry name" value="C95229"/>
</dbReference>
<dbReference type="RefSeq" id="WP_000907151.1">
    <property type="nucleotide sequence ID" value="NZ_CP155539.1"/>
</dbReference>
<dbReference type="SMR" id="Q97NQ7"/>
<dbReference type="PaxDb" id="170187-SP_1961"/>
<dbReference type="EnsemblBacteria" id="AAK76028">
    <property type="protein sequence ID" value="AAK76028"/>
    <property type="gene ID" value="SP_1961"/>
</dbReference>
<dbReference type="KEGG" id="spn:SP_1961"/>
<dbReference type="eggNOG" id="COG0085">
    <property type="taxonomic scope" value="Bacteria"/>
</dbReference>
<dbReference type="PhylomeDB" id="Q97NQ7"/>
<dbReference type="BioCyc" id="SPNE170187:G1FZB-2015-MONOMER"/>
<dbReference type="Proteomes" id="UP000000585">
    <property type="component" value="Chromosome"/>
</dbReference>
<dbReference type="GO" id="GO:0000428">
    <property type="term" value="C:DNA-directed RNA polymerase complex"/>
    <property type="evidence" value="ECO:0007669"/>
    <property type="project" value="UniProtKB-KW"/>
</dbReference>
<dbReference type="GO" id="GO:0003677">
    <property type="term" value="F:DNA binding"/>
    <property type="evidence" value="ECO:0007669"/>
    <property type="project" value="UniProtKB-UniRule"/>
</dbReference>
<dbReference type="GO" id="GO:0003899">
    <property type="term" value="F:DNA-directed RNA polymerase activity"/>
    <property type="evidence" value="ECO:0007669"/>
    <property type="project" value="UniProtKB-UniRule"/>
</dbReference>
<dbReference type="GO" id="GO:0032549">
    <property type="term" value="F:ribonucleoside binding"/>
    <property type="evidence" value="ECO:0007669"/>
    <property type="project" value="InterPro"/>
</dbReference>
<dbReference type="GO" id="GO:0006351">
    <property type="term" value="P:DNA-templated transcription"/>
    <property type="evidence" value="ECO:0007669"/>
    <property type="project" value="UniProtKB-UniRule"/>
</dbReference>
<dbReference type="CDD" id="cd00653">
    <property type="entry name" value="RNA_pol_B_RPB2"/>
    <property type="match status" value="1"/>
</dbReference>
<dbReference type="Gene3D" id="2.40.50.100">
    <property type="match status" value="1"/>
</dbReference>
<dbReference type="Gene3D" id="2.40.50.150">
    <property type="match status" value="1"/>
</dbReference>
<dbReference type="Gene3D" id="3.90.1100.10">
    <property type="match status" value="2"/>
</dbReference>
<dbReference type="Gene3D" id="2.30.150.10">
    <property type="entry name" value="DNA-directed RNA polymerase, beta subunit, external 1 domain"/>
    <property type="match status" value="1"/>
</dbReference>
<dbReference type="Gene3D" id="2.40.270.10">
    <property type="entry name" value="DNA-directed RNA polymerase, subunit 2, domain 6"/>
    <property type="match status" value="2"/>
</dbReference>
<dbReference type="Gene3D" id="3.90.1800.10">
    <property type="entry name" value="RNA polymerase alpha subunit dimerisation domain"/>
    <property type="match status" value="1"/>
</dbReference>
<dbReference type="Gene3D" id="3.90.1110.10">
    <property type="entry name" value="RNA polymerase Rpb2, domain 2"/>
    <property type="match status" value="2"/>
</dbReference>
<dbReference type="HAMAP" id="MF_01321">
    <property type="entry name" value="RNApol_bact_RpoB"/>
    <property type="match status" value="1"/>
</dbReference>
<dbReference type="InterPro" id="IPR042107">
    <property type="entry name" value="DNA-dir_RNA_pol_bsu_ext_1_sf"/>
</dbReference>
<dbReference type="InterPro" id="IPR019462">
    <property type="entry name" value="DNA-dir_RNA_pol_bsu_external_1"/>
</dbReference>
<dbReference type="InterPro" id="IPR015712">
    <property type="entry name" value="DNA-dir_RNA_pol_su2"/>
</dbReference>
<dbReference type="InterPro" id="IPR007120">
    <property type="entry name" value="DNA-dir_RNAP_su2_dom"/>
</dbReference>
<dbReference type="InterPro" id="IPR037033">
    <property type="entry name" value="DNA-dir_RNAP_su2_hyb_sf"/>
</dbReference>
<dbReference type="InterPro" id="IPR010243">
    <property type="entry name" value="RNA_pol_bsu_bac"/>
</dbReference>
<dbReference type="InterPro" id="IPR007121">
    <property type="entry name" value="RNA_pol_bsu_CS"/>
</dbReference>
<dbReference type="InterPro" id="IPR007644">
    <property type="entry name" value="RNA_pol_bsu_protrusion"/>
</dbReference>
<dbReference type="InterPro" id="IPR007642">
    <property type="entry name" value="RNA_pol_Rpb2_2"/>
</dbReference>
<dbReference type="InterPro" id="IPR037034">
    <property type="entry name" value="RNA_pol_Rpb2_2_sf"/>
</dbReference>
<dbReference type="InterPro" id="IPR007645">
    <property type="entry name" value="RNA_pol_Rpb2_3"/>
</dbReference>
<dbReference type="InterPro" id="IPR007641">
    <property type="entry name" value="RNA_pol_Rpb2_7"/>
</dbReference>
<dbReference type="InterPro" id="IPR014724">
    <property type="entry name" value="RNA_pol_RPB2_OB-fold"/>
</dbReference>
<dbReference type="NCBIfam" id="NF001616">
    <property type="entry name" value="PRK00405.1"/>
    <property type="match status" value="1"/>
</dbReference>
<dbReference type="NCBIfam" id="TIGR02013">
    <property type="entry name" value="rpoB"/>
    <property type="match status" value="1"/>
</dbReference>
<dbReference type="PANTHER" id="PTHR20856">
    <property type="entry name" value="DNA-DIRECTED RNA POLYMERASE I SUBUNIT 2"/>
    <property type="match status" value="1"/>
</dbReference>
<dbReference type="Pfam" id="PF04563">
    <property type="entry name" value="RNA_pol_Rpb2_1"/>
    <property type="match status" value="1"/>
</dbReference>
<dbReference type="Pfam" id="PF04561">
    <property type="entry name" value="RNA_pol_Rpb2_2"/>
    <property type="match status" value="2"/>
</dbReference>
<dbReference type="Pfam" id="PF04565">
    <property type="entry name" value="RNA_pol_Rpb2_3"/>
    <property type="match status" value="1"/>
</dbReference>
<dbReference type="Pfam" id="PF10385">
    <property type="entry name" value="RNA_pol_Rpb2_45"/>
    <property type="match status" value="1"/>
</dbReference>
<dbReference type="Pfam" id="PF00562">
    <property type="entry name" value="RNA_pol_Rpb2_6"/>
    <property type="match status" value="1"/>
</dbReference>
<dbReference type="Pfam" id="PF04560">
    <property type="entry name" value="RNA_pol_Rpb2_7"/>
    <property type="match status" value="1"/>
</dbReference>
<dbReference type="SUPFAM" id="SSF64484">
    <property type="entry name" value="beta and beta-prime subunits of DNA dependent RNA-polymerase"/>
    <property type="match status" value="1"/>
</dbReference>
<dbReference type="PROSITE" id="PS01166">
    <property type="entry name" value="RNA_POL_BETA"/>
    <property type="match status" value="1"/>
</dbReference>